<name>ADRO_YEAST</name>
<dbReference type="EC" id="1.18.1.6" evidence="10"/>
<dbReference type="EMBL" id="U28038">
    <property type="protein sequence ID" value="AAA69523.1"/>
    <property type="molecule type" value="Genomic_DNA"/>
</dbReference>
<dbReference type="EMBL" id="U38689">
    <property type="protein sequence ID" value="AAC49500.1"/>
    <property type="molecule type" value="Genomic_DNA"/>
</dbReference>
<dbReference type="EMBL" id="U28373">
    <property type="protein sequence ID" value="AAB64812.1"/>
    <property type="molecule type" value="Genomic_DNA"/>
</dbReference>
<dbReference type="EMBL" id="AH006006">
    <property type="protein sequence ID" value="AAC09006.1"/>
    <property type="molecule type" value="Genomic_DNA"/>
</dbReference>
<dbReference type="EMBL" id="BK006938">
    <property type="protein sequence ID" value="DAA12218.1"/>
    <property type="molecule type" value="Genomic_DNA"/>
</dbReference>
<dbReference type="PIR" id="S61171">
    <property type="entry name" value="S61171"/>
</dbReference>
<dbReference type="RefSeq" id="NP_010664.3">
    <property type="nucleotide sequence ID" value="NM_001180684.3"/>
</dbReference>
<dbReference type="SMR" id="P48360"/>
<dbReference type="BioGRID" id="32435">
    <property type="interactions" value="54"/>
</dbReference>
<dbReference type="DIP" id="DIP-1201N"/>
<dbReference type="FunCoup" id="P48360">
    <property type="interactions" value="634"/>
</dbReference>
<dbReference type="IntAct" id="P48360">
    <property type="interactions" value="2"/>
</dbReference>
<dbReference type="MINT" id="P48360"/>
<dbReference type="STRING" id="4932.YDR376W"/>
<dbReference type="PaxDb" id="4932-YDR376W"/>
<dbReference type="PeptideAtlas" id="P48360"/>
<dbReference type="EnsemblFungi" id="YDR376W_mRNA">
    <property type="protein sequence ID" value="YDR376W"/>
    <property type="gene ID" value="YDR376W"/>
</dbReference>
<dbReference type="GeneID" id="851982"/>
<dbReference type="KEGG" id="sce:YDR376W"/>
<dbReference type="AGR" id="SGD:S000002784"/>
<dbReference type="SGD" id="S000002784">
    <property type="gene designation" value="ARH1"/>
</dbReference>
<dbReference type="VEuPathDB" id="FungiDB:YDR376W"/>
<dbReference type="eggNOG" id="KOG1800">
    <property type="taxonomic scope" value="Eukaryota"/>
</dbReference>
<dbReference type="GeneTree" id="ENSGT00390000013574"/>
<dbReference type="HOGENOM" id="CLU_024722_3_1_1"/>
<dbReference type="InParanoid" id="P48360"/>
<dbReference type="OMA" id="RFNFIGN"/>
<dbReference type="OrthoDB" id="333024at2759"/>
<dbReference type="BioCyc" id="MetaCyc:YDR376W-MONOMER"/>
<dbReference type="BioCyc" id="YEAST:YDR376W-MONOMER"/>
<dbReference type="Reactome" id="R-SCE-2395516">
    <property type="pathway name" value="Electron transport from NADPH to Ferredoxin"/>
</dbReference>
<dbReference type="BioGRID-ORCS" id="851982">
    <property type="hits" value="6 hits in 10 CRISPR screens"/>
</dbReference>
<dbReference type="PRO" id="PR:P48360"/>
<dbReference type="Proteomes" id="UP000002311">
    <property type="component" value="Chromosome IV"/>
</dbReference>
<dbReference type="RNAct" id="P48360">
    <property type="molecule type" value="protein"/>
</dbReference>
<dbReference type="GO" id="GO:0005743">
    <property type="term" value="C:mitochondrial inner membrane"/>
    <property type="evidence" value="ECO:0000314"/>
    <property type="project" value="SGD"/>
</dbReference>
<dbReference type="GO" id="GO:0005739">
    <property type="term" value="C:mitochondrion"/>
    <property type="evidence" value="ECO:0007005"/>
    <property type="project" value="SGD"/>
</dbReference>
<dbReference type="GO" id="GO:0004324">
    <property type="term" value="F:ferredoxin-NADP+ reductase activity"/>
    <property type="evidence" value="ECO:0000314"/>
    <property type="project" value="SGD"/>
</dbReference>
<dbReference type="GO" id="GO:0016491">
    <property type="term" value="F:oxidoreductase activity"/>
    <property type="evidence" value="ECO:0000318"/>
    <property type="project" value="GO_Central"/>
</dbReference>
<dbReference type="GO" id="GO:0006879">
    <property type="term" value="P:intracellular iron ion homeostasis"/>
    <property type="evidence" value="ECO:0000315"/>
    <property type="project" value="SGD"/>
</dbReference>
<dbReference type="GO" id="GO:0006744">
    <property type="term" value="P:ubiquinone biosynthetic process"/>
    <property type="evidence" value="ECO:0000315"/>
    <property type="project" value="SGD"/>
</dbReference>
<dbReference type="FunFam" id="3.50.50.60:FF:000426">
    <property type="entry name" value="NADPH:adrenodoxin oxidoreductase, mitochondrial"/>
    <property type="match status" value="1"/>
</dbReference>
<dbReference type="Gene3D" id="3.50.50.60">
    <property type="entry name" value="FAD/NAD(P)-binding domain"/>
    <property type="match status" value="1"/>
</dbReference>
<dbReference type="Gene3D" id="3.40.50.720">
    <property type="entry name" value="NAD(P)-binding Rossmann-like Domain"/>
    <property type="match status" value="1"/>
</dbReference>
<dbReference type="InterPro" id="IPR036188">
    <property type="entry name" value="FAD/NAD-bd_sf"/>
</dbReference>
<dbReference type="InterPro" id="IPR055275">
    <property type="entry name" value="Ferredox_Rdtase"/>
</dbReference>
<dbReference type="InterPro" id="IPR021163">
    <property type="entry name" value="Ferredox_Rdtase_adrenod"/>
</dbReference>
<dbReference type="PANTHER" id="PTHR48467">
    <property type="entry name" value="GLUTAMATE SYNTHASE 1 [NADH], CHLOROPLASTIC-LIKE"/>
    <property type="match status" value="1"/>
</dbReference>
<dbReference type="PANTHER" id="PTHR48467:SF1">
    <property type="entry name" value="GLUTAMATE SYNTHASE 1 [NADH], CHLOROPLASTIC-LIKE"/>
    <property type="match status" value="1"/>
</dbReference>
<dbReference type="Pfam" id="PF13450">
    <property type="entry name" value="NAD_binding_8"/>
    <property type="match status" value="1"/>
</dbReference>
<dbReference type="PIRSF" id="PIRSF000362">
    <property type="entry name" value="FNR"/>
    <property type="match status" value="1"/>
</dbReference>
<dbReference type="PRINTS" id="PR00419">
    <property type="entry name" value="ADXRDTASE"/>
</dbReference>
<dbReference type="SUPFAM" id="SSF51971">
    <property type="entry name" value="Nucleotide-binding domain"/>
    <property type="match status" value="1"/>
</dbReference>
<organism>
    <name type="scientific">Saccharomyces cerevisiae (strain ATCC 204508 / S288c)</name>
    <name type="common">Baker's yeast</name>
    <dbReference type="NCBI Taxonomy" id="559292"/>
    <lineage>
        <taxon>Eukaryota</taxon>
        <taxon>Fungi</taxon>
        <taxon>Dikarya</taxon>
        <taxon>Ascomycota</taxon>
        <taxon>Saccharomycotina</taxon>
        <taxon>Saccharomycetes</taxon>
        <taxon>Saccharomycetales</taxon>
        <taxon>Saccharomycetaceae</taxon>
        <taxon>Saccharomyces</taxon>
    </lineage>
</organism>
<keyword id="KW-0249">Electron transport</keyword>
<keyword id="KW-0274">FAD</keyword>
<keyword id="KW-0285">Flavoprotein</keyword>
<keyword id="KW-0472">Membrane</keyword>
<keyword id="KW-0496">Mitochondrion</keyword>
<keyword id="KW-0999">Mitochondrion inner membrane</keyword>
<keyword id="KW-0521">NADP</keyword>
<keyword id="KW-0560">Oxidoreductase</keyword>
<keyword id="KW-1185">Reference proteome</keyword>
<keyword id="KW-0809">Transit peptide</keyword>
<keyword id="KW-0813">Transport</keyword>
<comment type="function">
    <text evidence="3 4 6 8 9 10">Adrenodoxin reductase transfers electrons from NADPH to adrenodoxin, which is involved in heme A biosynthesis and in iron-sulfur cluster assembly (PubMed:15211518, PubMed:9727014). Involved in the electron transfer to heme A synthase COX15, a heme protein that catalyzes the conversion of heme O to heme A (PubMed:11248251). Required for the de novo synthesis of Fe-S clusters on iron sulfur cluster assembly protein ISU1. Involved in electron delivery for Fe-S cluster synthesis (PubMed:15211518). Essential for coenzyme Q biosynthesis. May be involved in the electron transfer required for the hydroxylation reaction performed by COQ6 (PubMed:20534343, PubMed:21944752). May play a role in cellular and mitochondrial iron homeostasis (PubMed:11035018).</text>
</comment>
<comment type="catalytic activity">
    <reaction evidence="10">
        <text>2 reduced [adrenodoxin] + NADP(+) + H(+) = 2 oxidized [adrenodoxin] + NADPH</text>
        <dbReference type="Rhea" id="RHEA:42312"/>
        <dbReference type="Rhea" id="RHEA-COMP:9998"/>
        <dbReference type="Rhea" id="RHEA-COMP:9999"/>
        <dbReference type="ChEBI" id="CHEBI:15378"/>
        <dbReference type="ChEBI" id="CHEBI:33737"/>
        <dbReference type="ChEBI" id="CHEBI:33738"/>
        <dbReference type="ChEBI" id="CHEBI:57783"/>
        <dbReference type="ChEBI" id="CHEBI:58349"/>
        <dbReference type="EC" id="1.18.1.6"/>
    </reaction>
</comment>
<comment type="cofactor">
    <cofactor evidence="1">
        <name>FAD</name>
        <dbReference type="ChEBI" id="CHEBI:57692"/>
    </cofactor>
</comment>
<comment type="biophysicochemical properties">
    <kinetics>
        <KM evidence="10">0.5 uM for NADPH</KM>
        <KM evidence="10">0.6 uM for NADH</KM>
        <KM evidence="10">0.1 uM for bovine adrenodoxin</KM>
    </kinetics>
</comment>
<comment type="subcellular location">
    <subcellularLocation>
        <location evidence="7 10 11">Mitochondrion inner membrane</location>
        <topology evidence="14">Peripheral membrane protein</topology>
    </subcellularLocation>
</comment>
<comment type="disruption phenotype">
    <text evidence="10">Lethality in aerobic growth conditions and also during fermentation.</text>
</comment>
<comment type="miscellaneous">
    <text evidence="5">Present with 1600 molecules/cell in log phase SD medium.</text>
</comment>
<comment type="similarity">
    <text evidence="14">Belongs to the ferredoxin--NADP reductase type 1 family.</text>
</comment>
<protein>
    <recommendedName>
        <fullName evidence="13">Probable NADPH:adrenodoxin oxidoreductase, mitochondrial</fullName>
        <shortName evidence="13">AR</shortName>
        <shortName evidence="13">Adrenodoxin reductase</shortName>
        <ecNumber evidence="10">1.18.1.6</ecNumber>
    </recommendedName>
    <alternativeName>
        <fullName evidence="12">Ferredoxin--NADP(+) reductase</fullName>
        <shortName>FDXR</shortName>
        <shortName evidence="12">Ferredoxin reductase</shortName>
    </alternativeName>
</protein>
<evidence type="ECO:0000250" key="1">
    <source>
        <dbReference type="UniProtKB" id="P08165"/>
    </source>
</evidence>
<evidence type="ECO:0000255" key="2"/>
<evidence type="ECO:0000269" key="3">
    <source>
    </source>
</evidence>
<evidence type="ECO:0000269" key="4">
    <source>
    </source>
</evidence>
<evidence type="ECO:0000269" key="5">
    <source>
    </source>
</evidence>
<evidence type="ECO:0000269" key="6">
    <source>
    </source>
</evidence>
<evidence type="ECO:0000269" key="7">
    <source>
    </source>
</evidence>
<evidence type="ECO:0000269" key="8">
    <source>
    </source>
</evidence>
<evidence type="ECO:0000269" key="9">
    <source>
    </source>
</evidence>
<evidence type="ECO:0000269" key="10">
    <source>
    </source>
</evidence>
<evidence type="ECO:0000269" key="11">
    <source>
    </source>
</evidence>
<evidence type="ECO:0000303" key="12">
    <source>
    </source>
</evidence>
<evidence type="ECO:0000303" key="13">
    <source>
    </source>
</evidence>
<evidence type="ECO:0000305" key="14"/>
<accession>P48360</accession>
<accession>D6VT08</accession>
<accession>P32840</accession>
<sequence>MSFVQIRHISSQINRKTVSIVGSGPSGFYTAYHLLKKSPIPLNVTIWEKLPVPFGLSRYGVAPDHPEVKNCEETFTTCAEEFSSPTNQKHKFSFVGGITIGKEILLKELLDNQDAVILSYGCTGDRKLNIPGELGTKGVFSSREFVNWYNGHPDFAKDKRFTDFDWSKVSKVGIIGNGNVALDITRVLISNQIDEIWENTDISSLALNLLRRAPVKDVKLIARRDFVHSKFTNKELRELWELEKYGIRGRIDPKFFQKEMFDPSKYDRAFNRRVEMCSEYLKPFNERSKKNYKKAPPPSSGYDKFWELDYLKTPLKINRDDFGAINSLSLCNNRLNEDNSLQPLKDVNNIMTYKVDLLITSLGYAGVPMPEFSKLSIGFDKDHIANKQGRVLTSSGEIFPHLYASGWIRKGSQGVIASTMQDAFEVGDRVIQDLVVSGALSLENSIDLSNIKHTTWKDWERINKKELLRGKKEHKTRSKFLTFEELWNGVEGI</sequence>
<feature type="transit peptide" description="Mitochondrion" evidence="2">
    <location>
        <begin position="1"/>
        <end status="unknown"/>
    </location>
</feature>
<feature type="chain" id="PRO_0000019425" description="Probable NADPH:adrenodoxin oxidoreductase, mitochondrial">
    <location>
        <begin status="unknown"/>
        <end position="493"/>
    </location>
</feature>
<feature type="binding site" evidence="1">
    <location>
        <position position="26"/>
    </location>
    <ligand>
        <name>FAD</name>
        <dbReference type="ChEBI" id="CHEBI:57692"/>
    </ligand>
</feature>
<feature type="binding site" evidence="1">
    <location>
        <position position="48"/>
    </location>
    <ligand>
        <name>FAD</name>
        <dbReference type="ChEBI" id="CHEBI:57692"/>
    </ligand>
</feature>
<feature type="binding site" evidence="1">
    <location>
        <position position="56"/>
    </location>
    <ligand>
        <name>FAD</name>
        <dbReference type="ChEBI" id="CHEBI:57692"/>
    </ligand>
</feature>
<feature type="binding site" evidence="1">
    <location>
        <position position="100"/>
    </location>
    <ligand>
        <name>FAD</name>
        <dbReference type="ChEBI" id="CHEBI:57692"/>
    </ligand>
</feature>
<feature type="binding site" evidence="1">
    <location>
        <begin position="177"/>
        <end position="180"/>
    </location>
    <ligand>
        <name>NADP(+)</name>
        <dbReference type="ChEBI" id="CHEBI:58349"/>
    </ligand>
</feature>
<feature type="binding site" evidence="1">
    <location>
        <begin position="223"/>
        <end position="224"/>
    </location>
    <ligand>
        <name>NADP(+)</name>
        <dbReference type="ChEBI" id="CHEBI:58349"/>
    </ligand>
</feature>
<feature type="binding site" evidence="1">
    <location>
        <position position="235"/>
    </location>
    <ligand>
        <name>NADP(+)</name>
        <dbReference type="ChEBI" id="CHEBI:58349"/>
    </ligand>
</feature>
<feature type="binding site" evidence="1">
    <location>
        <position position="407"/>
    </location>
    <ligand>
        <name>FAD</name>
        <dbReference type="ChEBI" id="CHEBI:57692"/>
    </ligand>
</feature>
<feature type="binding site" evidence="1">
    <location>
        <begin position="414"/>
        <end position="416"/>
    </location>
    <ligand>
        <name>FAD</name>
        <dbReference type="ChEBI" id="CHEBI:57692"/>
    </ligand>
</feature>
<feature type="binding site" evidence="1">
    <location>
        <position position="414"/>
    </location>
    <ligand>
        <name>NADP(+)</name>
        <dbReference type="ChEBI" id="CHEBI:58349"/>
    </ligand>
</feature>
<feature type="sequence conflict" description="In Ref. 2; AAC49500." evidence="14" ref="2">
    <original>H</original>
    <variation>Y</variation>
    <location>
        <position position="33"/>
    </location>
</feature>
<feature type="sequence conflict" description="In Ref. 1; AAA69523." evidence="14" ref="1">
    <original>G</original>
    <variation>S</variation>
    <location>
        <position position="132"/>
    </location>
</feature>
<reference key="1">
    <citation type="journal article" date="1998" name="Yeast">
        <title>ARH1 of Saccharomyces cerevisiae: a new essential gene that codes for a protein homologous to the human adrenodoxin reductase.</title>
        <authorList>
            <person name="Manzella L."/>
            <person name="Barros M.H."/>
            <person name="Nobrega F.G."/>
        </authorList>
    </citation>
    <scope>NUCLEOTIDE SEQUENCE [GENOMIC DNA]</scope>
    <scope>SUBCELLULAR LOCATION</scope>
</reference>
<reference key="2">
    <citation type="journal article" date="1996" name="Gene">
        <title>A gene encoding a yeast equivalent of mammalian NADPH-adrenodoxin oxidoreductases.</title>
        <authorList>
            <person name="Lacour T."/>
            <person name="Dumas B.L."/>
        </authorList>
    </citation>
    <scope>NUCLEOTIDE SEQUENCE [GENOMIC DNA]</scope>
    <source>
        <strain>FL200</strain>
    </source>
</reference>
<reference key="3">
    <citation type="journal article" date="1997" name="Nature">
        <title>The nucleotide sequence of Saccharomyces cerevisiae chromosome IV.</title>
        <authorList>
            <person name="Jacq C."/>
            <person name="Alt-Moerbe J."/>
            <person name="Andre B."/>
            <person name="Arnold W."/>
            <person name="Bahr A."/>
            <person name="Ballesta J.P.G."/>
            <person name="Bargues M."/>
            <person name="Baron L."/>
            <person name="Becker A."/>
            <person name="Biteau N."/>
            <person name="Bloecker H."/>
            <person name="Blugeon C."/>
            <person name="Boskovic J."/>
            <person name="Brandt P."/>
            <person name="Brueckner M."/>
            <person name="Buitrago M.J."/>
            <person name="Coster F."/>
            <person name="Delaveau T."/>
            <person name="del Rey F."/>
            <person name="Dujon B."/>
            <person name="Eide L.G."/>
            <person name="Garcia-Cantalejo J.M."/>
            <person name="Goffeau A."/>
            <person name="Gomez-Peris A."/>
            <person name="Granotier C."/>
            <person name="Hanemann V."/>
            <person name="Hankeln T."/>
            <person name="Hoheisel J.D."/>
            <person name="Jaeger W."/>
            <person name="Jimenez A."/>
            <person name="Jonniaux J.-L."/>
            <person name="Kraemer C."/>
            <person name="Kuester H."/>
            <person name="Laamanen P."/>
            <person name="Legros Y."/>
            <person name="Louis E.J."/>
            <person name="Moeller-Rieker S."/>
            <person name="Monnet A."/>
            <person name="Moro M."/>
            <person name="Mueller-Auer S."/>
            <person name="Nussbaumer B."/>
            <person name="Paricio N."/>
            <person name="Paulin L."/>
            <person name="Perea J."/>
            <person name="Perez-Alonso M."/>
            <person name="Perez-Ortin J.E."/>
            <person name="Pohl T.M."/>
            <person name="Prydz H."/>
            <person name="Purnelle B."/>
            <person name="Rasmussen S.W."/>
            <person name="Remacha M.A."/>
            <person name="Revuelta J.L."/>
            <person name="Rieger M."/>
            <person name="Salom D."/>
            <person name="Saluz H.P."/>
            <person name="Saiz J.E."/>
            <person name="Saren A.-M."/>
            <person name="Schaefer M."/>
            <person name="Scharfe M."/>
            <person name="Schmidt E.R."/>
            <person name="Schneider C."/>
            <person name="Scholler P."/>
            <person name="Schwarz S."/>
            <person name="Soler-Mira A."/>
            <person name="Urrestarazu L.A."/>
            <person name="Verhasselt P."/>
            <person name="Vissers S."/>
            <person name="Voet M."/>
            <person name="Volckaert G."/>
            <person name="Wagner G."/>
            <person name="Wambutt R."/>
            <person name="Wedler E."/>
            <person name="Wedler H."/>
            <person name="Woelfl S."/>
            <person name="Harris D.E."/>
            <person name="Bowman S."/>
            <person name="Brown D."/>
            <person name="Churcher C.M."/>
            <person name="Connor R."/>
            <person name="Dedman K."/>
            <person name="Gentles S."/>
            <person name="Hamlin N."/>
            <person name="Hunt S."/>
            <person name="Jones L."/>
            <person name="McDonald S."/>
            <person name="Murphy L.D."/>
            <person name="Niblett D."/>
            <person name="Odell C."/>
            <person name="Oliver K."/>
            <person name="Rajandream M.A."/>
            <person name="Richards C."/>
            <person name="Shore L."/>
            <person name="Walsh S.V."/>
            <person name="Barrell B.G."/>
            <person name="Dietrich F.S."/>
            <person name="Mulligan J.T."/>
            <person name="Allen E."/>
            <person name="Araujo R."/>
            <person name="Aviles E."/>
            <person name="Berno A."/>
            <person name="Carpenter J."/>
            <person name="Chen E."/>
            <person name="Cherry J.M."/>
            <person name="Chung E."/>
            <person name="Duncan M."/>
            <person name="Hunicke-Smith S."/>
            <person name="Hyman R.W."/>
            <person name="Komp C."/>
            <person name="Lashkari D."/>
            <person name="Lew H."/>
            <person name="Lin D."/>
            <person name="Mosedale D."/>
            <person name="Nakahara K."/>
            <person name="Namath A."/>
            <person name="Oefner P."/>
            <person name="Oh C."/>
            <person name="Petel F.X."/>
            <person name="Roberts D."/>
            <person name="Schramm S."/>
            <person name="Schroeder M."/>
            <person name="Shogren T."/>
            <person name="Shroff N."/>
            <person name="Winant A."/>
            <person name="Yelton M.A."/>
            <person name="Botstein D."/>
            <person name="Davis R.W."/>
            <person name="Johnston M."/>
            <person name="Andrews S."/>
            <person name="Brinkman R."/>
            <person name="Cooper J."/>
            <person name="Ding H."/>
            <person name="Du Z."/>
            <person name="Favello A."/>
            <person name="Fulton L."/>
            <person name="Gattung S."/>
            <person name="Greco T."/>
            <person name="Hallsworth K."/>
            <person name="Hawkins J."/>
            <person name="Hillier L.W."/>
            <person name="Jier M."/>
            <person name="Johnson D."/>
            <person name="Johnston L."/>
            <person name="Kirsten J."/>
            <person name="Kucaba T."/>
            <person name="Langston Y."/>
            <person name="Latreille P."/>
            <person name="Le T."/>
            <person name="Mardis E."/>
            <person name="Menezes S."/>
            <person name="Miller N."/>
            <person name="Nhan M."/>
            <person name="Pauley A."/>
            <person name="Peluso D."/>
            <person name="Rifkin L."/>
            <person name="Riles L."/>
            <person name="Taich A."/>
            <person name="Trevaskis E."/>
            <person name="Vignati D."/>
            <person name="Wilcox L."/>
            <person name="Wohldman P."/>
            <person name="Vaudin M."/>
            <person name="Wilson R."/>
            <person name="Waterston R."/>
            <person name="Albermann K."/>
            <person name="Hani J."/>
            <person name="Heumann K."/>
            <person name="Kleine K."/>
            <person name="Mewes H.-W."/>
            <person name="Zollner A."/>
            <person name="Zaccaria P."/>
        </authorList>
    </citation>
    <scope>NUCLEOTIDE SEQUENCE [LARGE SCALE GENOMIC DNA]</scope>
    <source>
        <strain>ATCC 204508 / S288c</strain>
    </source>
</reference>
<reference key="4">
    <citation type="journal article" date="2014" name="G3 (Bethesda)">
        <title>The reference genome sequence of Saccharomyces cerevisiae: Then and now.</title>
        <authorList>
            <person name="Engel S.R."/>
            <person name="Dietrich F.S."/>
            <person name="Fisk D.G."/>
            <person name="Binkley G."/>
            <person name="Balakrishnan R."/>
            <person name="Costanzo M.C."/>
            <person name="Dwight S.S."/>
            <person name="Hitz B.C."/>
            <person name="Karra K."/>
            <person name="Nash R.S."/>
            <person name="Weng S."/>
            <person name="Wong E.D."/>
            <person name="Lloyd P."/>
            <person name="Skrzypek M.S."/>
            <person name="Miyasato S.R."/>
            <person name="Simison M."/>
            <person name="Cherry J.M."/>
        </authorList>
    </citation>
    <scope>GENOME REANNOTATION</scope>
    <source>
        <strain>ATCC 204508 / S288c</strain>
    </source>
</reference>
<reference key="5">
    <citation type="journal article" date="1992" name="EMBO J.">
        <title>BCS1, a novel gene required for the expression of functional Rieske iron-sulfur protein in Saccharomyces cerevisiae.</title>
        <authorList>
            <person name="Nobrega F.G."/>
            <person name="Nobrega M.P."/>
            <person name="Tzagoloff A."/>
        </authorList>
    </citation>
    <scope>NUCLEOTIDE SEQUENCE [GENOMIC DNA] OF 1-64</scope>
</reference>
<reference key="6">
    <citation type="journal article" date="1998" name="J. Biol. Chem.">
        <title>Characterization of recombinant adrenodoxin reductase homologue (Arh1p) from yeast. Implication in in vitro cytochrome p45011beta monooxygenase system.</title>
        <authorList>
            <person name="Lacour T."/>
            <person name="Achstetter T."/>
            <person name="Dumas B."/>
        </authorList>
    </citation>
    <scope>FUNCTION</scope>
    <scope>CATALYTIC ACTIVITY</scope>
    <scope>BIOPHYSICOCHEMICAL PROPERTIES</scope>
    <scope>SUBCELLULAR LOCATION</scope>
    <scope>DISRUPTION PHENOTYPE</scope>
</reference>
<reference key="7">
    <citation type="journal article" date="2001" name="FEBS Lett.">
        <title>Involvement of mitochondrial ferredoxin and Cox15p in hydroxylation of heme O.</title>
        <authorList>
            <person name="Barros M.H."/>
            <person name="Carlson C.G."/>
            <person name="Glerum D.M."/>
            <person name="Tzagoloff A."/>
        </authorList>
    </citation>
    <scope>FUNCTION</scope>
</reference>
<reference key="8">
    <citation type="journal article" date="2001" name="J. Biol. Chem.">
        <title>Adrenodoxin reductase homolog (Arh1p) of yeast mitochondria required for iron homeostasis.</title>
        <authorList>
            <person name="Li J."/>
            <person name="Saxena S."/>
            <person name="Pain D."/>
            <person name="Dancis A."/>
        </authorList>
    </citation>
    <scope>FUNCTION</scope>
</reference>
<reference key="9">
    <citation type="journal article" date="2003" name="Nature">
        <title>Global analysis of protein expression in yeast.</title>
        <authorList>
            <person name="Ghaemmaghami S."/>
            <person name="Huh W.-K."/>
            <person name="Bower K."/>
            <person name="Howson R.W."/>
            <person name="Belle A."/>
            <person name="Dephoure N."/>
            <person name="O'Shea E.K."/>
            <person name="Weissman J.S."/>
        </authorList>
    </citation>
    <scope>LEVEL OF PROTEIN EXPRESSION [LARGE SCALE ANALYSIS]</scope>
</reference>
<reference key="10">
    <citation type="journal article" date="2004" name="Proteins">
        <title>Predictive reconstruction of the mitochondrial iron-sulfur cluster assembly metabolism: I. The role of the protein pair ferredoxin-ferredoxin reductase (Yah1-Arh1).</title>
        <authorList>
            <person name="Alves R."/>
            <person name="Herrero E."/>
            <person name="Sorribas A."/>
        </authorList>
    </citation>
    <scope>FUNCTION</scope>
</reference>
<reference key="11">
    <citation type="journal article" date="2006" name="J. Proteome Res.">
        <title>Toward the complete yeast mitochondrial proteome: multidimensional separation techniques for mitochondrial proteomics.</title>
        <authorList>
            <person name="Reinders J."/>
            <person name="Zahedi R.P."/>
            <person name="Pfanner N."/>
            <person name="Meisinger C."/>
            <person name="Sickmann A."/>
        </authorList>
    </citation>
    <scope>SUBCELLULAR LOCATION [LARGE SCALE ANALYSIS]</scope>
</reference>
<reference key="12">
    <citation type="journal article" date="2010" name="Chem. Biol.">
        <title>Involvement of mitochondrial ferredoxin and para-aminobenzoic acid in yeast coenzyme Q biosynthesis.</title>
        <authorList>
            <person name="Pierrel F."/>
            <person name="Hamelin O."/>
            <person name="Douki T."/>
            <person name="Kieffer-Jaquinod S."/>
            <person name="Muehlenhoff U."/>
            <person name="Ozeir M."/>
            <person name="Lill R."/>
            <person name="Fontecave M."/>
        </authorList>
    </citation>
    <scope>FUNCTION</scope>
</reference>
<reference key="13">
    <citation type="journal article" date="2011" name="Chem. Biol.">
        <title>Coenzyme Q biosynthesis: Coq6 is required for the C5-hydroxylation reaction and substrate analogs rescue Coq6 deficiency.</title>
        <authorList>
            <person name="Ozeir M."/>
            <person name="Muhlenhoff U."/>
            <person name="Webert H."/>
            <person name="Lill R."/>
            <person name="Fontecave M."/>
            <person name="Pierrel F."/>
        </authorList>
    </citation>
    <scope>FUNCTION</scope>
</reference>
<proteinExistence type="evidence at protein level"/>
<gene>
    <name evidence="13" type="primary">ARH1</name>
    <name type="ordered locus">YDR376W</name>
    <name type="ORF">D9481.5</name>
</gene>